<sequence length="893" mass="100546">MAGHHHEHEQERDHEQEHEHDSLQRPTTGSERTRSISFSKLLTRSWKRNASSSNNMSVSSVNLYSDPENSRESDHNNSGSEGQSSRFSKLKSMFQSGNSSKNASAHNSSQSSLEGDSASSSSKLRYVKPMTSVANASPASPPLSPTIPETDVLQTPKMVHIDQHEHEREHSNCGSPIMLSSSSFSPTVARTGTGRRRSPSTPIMPSQNSNNSSSTSAIRPNNYRHHSGSQGFSSNNPFRERAGTVRSSNPYFAYQGLPTHAMSSHDLDEGFQPYANGSGIHFLSTPTSKTNSLTNTKNLSNLSLNEIKENEEVQEFNNEDFFFHDIPKDLSLKDTLNGSPSRGSSKSPTITQTFPSIIVGFDNEYEEDNNNDKHDEKEEQQTTTDNKTRNLSPTKQNGKATHPRIKIPLRRAASEPNGLQLASATSPTSSSARKTSGSSNINDKIPGQSVPPPNSFFPQEPSPKISDFPEPRRSRRLRTKSFSNKFQDIMVGPQSFEKIRLLGQGDVGKVFLVREKKTNRVYALKVLSKDEMIKRNKIKRVLTEQEILATSNHPFIVTLYHSFQSEDYLYLCMEYCMGGEFFRALQTRKTKCICEDDARFYASEVTAALEYLHLLGFIYRDLKPENILLHQSGHIMLSDFDLSIQAKDSKVPVVKGSAQSTLVDTKICSDGFRTNSFVGTEEYIAPEVIRGNGHTAAVDWWTLGILIYEMLFGFTPFKGDNTNETFTNILKNEVSFPNNNEISRTCKDLIKKLLTKNESKRLGCKMGAADVKKHPFFKKVQWSLLRNQEPPLIPVLSEDGYDFAKLSSNKKRQTSQDSHKHLDEQEKNMFEERVEYDDEVSEDDPFHDFNSMSLMEQDNNSMIYGNTNSYGKIAYTPNSNRSRSNSHRTFFKR</sequence>
<evidence type="ECO:0000255" key="1">
    <source>
        <dbReference type="PROSITE-ProRule" id="PRU00159"/>
    </source>
</evidence>
<evidence type="ECO:0000255" key="2">
    <source>
        <dbReference type="PROSITE-ProRule" id="PRU00618"/>
    </source>
</evidence>
<evidence type="ECO:0000255" key="3">
    <source>
        <dbReference type="PROSITE-ProRule" id="PRU10027"/>
    </source>
</evidence>
<evidence type="ECO:0000256" key="4">
    <source>
        <dbReference type="SAM" id="MobiDB-lite"/>
    </source>
</evidence>
<evidence type="ECO:0000269" key="5">
    <source>
    </source>
</evidence>
<evidence type="ECO:0000269" key="6">
    <source>
    </source>
</evidence>
<evidence type="ECO:0000269" key="7">
    <source>
    </source>
</evidence>
<evidence type="ECO:0000269" key="8">
    <source>
    </source>
</evidence>
<evidence type="ECO:0000269" key="9">
    <source>
    </source>
</evidence>
<evidence type="ECO:0000269" key="10">
    <source>
    </source>
</evidence>
<evidence type="ECO:0007744" key="11">
    <source>
    </source>
</evidence>
<evidence type="ECO:0007744" key="12">
    <source>
    </source>
</evidence>
<evidence type="ECO:0007744" key="13">
    <source>
    </source>
</evidence>
<proteinExistence type="evidence at protein level"/>
<feature type="chain" id="PRO_0000086154" description="Flippase kinase 1">
    <location>
        <begin position="1"/>
        <end position="893"/>
    </location>
</feature>
<feature type="domain" description="Protein kinase" evidence="1">
    <location>
        <begin position="496"/>
        <end position="777"/>
    </location>
</feature>
<feature type="domain" description="AGC-kinase C-terminal" evidence="2">
    <location>
        <begin position="778"/>
        <end position="861"/>
    </location>
</feature>
<feature type="region of interest" description="Disordered" evidence="4">
    <location>
        <begin position="1"/>
        <end position="124"/>
    </location>
</feature>
<feature type="region of interest" description="Disordered" evidence="4">
    <location>
        <begin position="129"/>
        <end position="148"/>
    </location>
</feature>
<feature type="region of interest" description="Disordered" evidence="4">
    <location>
        <begin position="163"/>
        <end position="243"/>
    </location>
</feature>
<feature type="region of interest" description="Disordered" evidence="4">
    <location>
        <begin position="334"/>
        <end position="480"/>
    </location>
</feature>
<feature type="region of interest" description="Disordered" evidence="4">
    <location>
        <begin position="874"/>
        <end position="893"/>
    </location>
</feature>
<feature type="compositionally biased region" description="Basic and acidic residues" evidence="4">
    <location>
        <begin position="1"/>
        <end position="23"/>
    </location>
</feature>
<feature type="compositionally biased region" description="Polar residues" evidence="4">
    <location>
        <begin position="24"/>
        <end position="42"/>
    </location>
</feature>
<feature type="compositionally biased region" description="Low complexity" evidence="4">
    <location>
        <begin position="49"/>
        <end position="62"/>
    </location>
</feature>
<feature type="compositionally biased region" description="Polar residues" evidence="4">
    <location>
        <begin position="76"/>
        <end position="87"/>
    </location>
</feature>
<feature type="compositionally biased region" description="Low complexity" evidence="4">
    <location>
        <begin position="96"/>
        <end position="122"/>
    </location>
</feature>
<feature type="compositionally biased region" description="Low complexity" evidence="4">
    <location>
        <begin position="206"/>
        <end position="216"/>
    </location>
</feature>
<feature type="compositionally biased region" description="Polar residues" evidence="4">
    <location>
        <begin position="228"/>
        <end position="237"/>
    </location>
</feature>
<feature type="compositionally biased region" description="Polar residues" evidence="4">
    <location>
        <begin position="334"/>
        <end position="355"/>
    </location>
</feature>
<feature type="compositionally biased region" description="Basic and acidic residues" evidence="4">
    <location>
        <begin position="370"/>
        <end position="380"/>
    </location>
</feature>
<feature type="compositionally biased region" description="Polar residues" evidence="4">
    <location>
        <begin position="381"/>
        <end position="399"/>
    </location>
</feature>
<feature type="compositionally biased region" description="Low complexity" evidence="4">
    <location>
        <begin position="422"/>
        <end position="439"/>
    </location>
</feature>
<feature type="compositionally biased region" description="Basic residues" evidence="4">
    <location>
        <begin position="884"/>
        <end position="893"/>
    </location>
</feature>
<feature type="active site" description="Proton acceptor" evidence="1 3">
    <location>
        <position position="621"/>
    </location>
</feature>
<feature type="binding site" evidence="1">
    <location>
        <begin position="502"/>
        <end position="510"/>
    </location>
    <ligand>
        <name>ATP</name>
        <dbReference type="ChEBI" id="CHEBI:30616"/>
    </ligand>
</feature>
<feature type="binding site" evidence="1">
    <location>
        <position position="525"/>
    </location>
    <ligand>
        <name>ATP</name>
        <dbReference type="ChEBI" id="CHEBI:30616"/>
    </ligand>
</feature>
<feature type="modified residue" description="Phosphoserine" evidence="12 13">
    <location>
        <position position="140"/>
    </location>
</feature>
<feature type="modified residue" description="Phosphoserine" evidence="13">
    <location>
        <position position="144"/>
    </location>
</feature>
<feature type="modified residue" description="Phosphoserine" evidence="13">
    <location>
        <position position="171"/>
    </location>
</feature>
<feature type="modified residue" description="Phosphoserine" evidence="13">
    <location>
        <position position="175"/>
    </location>
</feature>
<feature type="modified residue" description="Phosphoserine" evidence="12">
    <location>
        <position position="185"/>
    </location>
</feature>
<feature type="modified residue" description="Phosphoserine" evidence="12 13">
    <location>
        <position position="300"/>
    </location>
</feature>
<feature type="modified residue" description="Phosphoserine" evidence="11 12 13">
    <location>
        <position position="414"/>
    </location>
</feature>
<feature type="modified residue" description="Phosphoserine" evidence="12 13">
    <location>
        <position position="462"/>
    </location>
</feature>
<keyword id="KW-0067">ATP-binding</keyword>
<keyword id="KW-1003">Cell membrane</keyword>
<keyword id="KW-0963">Cytoplasm</keyword>
<keyword id="KW-0418">Kinase</keyword>
<keyword id="KW-0445">Lipid transport</keyword>
<keyword id="KW-0472">Membrane</keyword>
<keyword id="KW-0547">Nucleotide-binding</keyword>
<keyword id="KW-0597">Phosphoprotein</keyword>
<keyword id="KW-1185">Reference proteome</keyword>
<keyword id="KW-0723">Serine/threonine-protein kinase</keyword>
<keyword id="KW-0808">Transferase</keyword>
<keyword id="KW-0813">Transport</keyword>
<organism>
    <name type="scientific">Saccharomyces cerevisiae (strain ATCC 204508 / S288c)</name>
    <name type="common">Baker's yeast</name>
    <dbReference type="NCBI Taxonomy" id="559292"/>
    <lineage>
        <taxon>Eukaryota</taxon>
        <taxon>Fungi</taxon>
        <taxon>Dikarya</taxon>
        <taxon>Ascomycota</taxon>
        <taxon>Saccharomycotina</taxon>
        <taxon>Saccharomycetes</taxon>
        <taxon>Saccharomycetales</taxon>
        <taxon>Saccharomycetaceae</taxon>
        <taxon>Saccharomyces</taxon>
    </lineage>
</organism>
<name>FPK1_YEAST</name>
<accession>P53739</accession>
<accession>D6W1M2</accession>
<comment type="function">
    <text evidence="5 8 9">Flippase activator that phosphorylates DNF1 and DNF2 and which is involved in the generation of phospholipid asymmetry in membranes by the inward translocation of phospholipids and in the retrieval pathway from early endosomes to the trans-Golgi network (TGN). Also phosphorylates the N-terminal half of YPK1. Involved in pheromone-response.</text>
</comment>
<comment type="catalytic activity">
    <reaction>
        <text>L-seryl-[protein] + ATP = O-phospho-L-seryl-[protein] + ADP + H(+)</text>
        <dbReference type="Rhea" id="RHEA:17989"/>
        <dbReference type="Rhea" id="RHEA-COMP:9863"/>
        <dbReference type="Rhea" id="RHEA-COMP:11604"/>
        <dbReference type="ChEBI" id="CHEBI:15378"/>
        <dbReference type="ChEBI" id="CHEBI:29999"/>
        <dbReference type="ChEBI" id="CHEBI:30616"/>
        <dbReference type="ChEBI" id="CHEBI:83421"/>
        <dbReference type="ChEBI" id="CHEBI:456216"/>
        <dbReference type="EC" id="2.7.11.1"/>
    </reaction>
</comment>
<comment type="catalytic activity">
    <reaction>
        <text>L-threonyl-[protein] + ATP = O-phospho-L-threonyl-[protein] + ADP + H(+)</text>
        <dbReference type="Rhea" id="RHEA:46608"/>
        <dbReference type="Rhea" id="RHEA-COMP:11060"/>
        <dbReference type="Rhea" id="RHEA-COMP:11605"/>
        <dbReference type="ChEBI" id="CHEBI:15378"/>
        <dbReference type="ChEBI" id="CHEBI:30013"/>
        <dbReference type="ChEBI" id="CHEBI:30616"/>
        <dbReference type="ChEBI" id="CHEBI:61977"/>
        <dbReference type="ChEBI" id="CHEBI:456216"/>
        <dbReference type="EC" id="2.7.11.1"/>
    </reaction>
</comment>
<comment type="activity regulation">
    <text evidence="9">Down-regulated by YKP1 phosphorylation. This effect is counteracted in the presence of mannosyl-inositolphosphorylceramide (MIPC).</text>
</comment>
<comment type="interaction">
    <interactant intactId="EBI-9813">
        <id>P53739</id>
    </interactant>
    <interactant intactId="EBI-3121">
        <id>P32660</id>
        <label>DNF1</label>
    </interactant>
    <organismsDiffer>false</organismsDiffer>
    <experiments>2</experiments>
</comment>
<comment type="interaction">
    <interactant intactId="EBI-9813">
        <id>P53739</id>
    </interactant>
    <interactant intactId="EBI-29473">
        <id>P12688</id>
        <label>YPK1</label>
    </interactant>
    <organismsDiffer>false</organismsDiffer>
    <experiments>2</experiments>
</comment>
<comment type="subcellular location">
    <subcellularLocation>
        <location evidence="6">Cytoplasm</location>
    </subcellularLocation>
    <subcellularLocation>
        <location evidence="6">Cell membrane</location>
        <topology evidence="6">Peripheral membrane protein</topology>
    </subcellularLocation>
</comment>
<comment type="PTM">
    <text evidence="9">The N-terminal non-catalytic domain is phosphorylated by YPK1.</text>
</comment>
<comment type="disruption phenotype">
    <text evidence="10">Simultaneous knockout of KIN82 leads to decreased phosphatidylcholine and glucosylceramide transport into the cell.</text>
</comment>
<comment type="miscellaneous">
    <text evidence="7">Present with 752 molecules/cell in log phase SD medium.</text>
</comment>
<comment type="similarity">
    <text evidence="1">Belongs to the protein kinase superfamily. Ser/Thr protein kinase family. KIN82 subfamily.</text>
</comment>
<reference key="1">
    <citation type="journal article" date="1997" name="Nature">
        <title>The nucleotide sequence of Saccharomyces cerevisiae chromosome XIV and its evolutionary implications.</title>
        <authorList>
            <person name="Philippsen P."/>
            <person name="Kleine K."/>
            <person name="Poehlmann R."/>
            <person name="Duesterhoeft A."/>
            <person name="Hamberg K."/>
            <person name="Hegemann J.H."/>
            <person name="Obermaier B."/>
            <person name="Urrestarazu L.A."/>
            <person name="Aert R."/>
            <person name="Albermann K."/>
            <person name="Altmann R."/>
            <person name="Andre B."/>
            <person name="Baladron V."/>
            <person name="Ballesta J.P.G."/>
            <person name="Becam A.-M."/>
            <person name="Beinhauer J.D."/>
            <person name="Boskovic J."/>
            <person name="Buitrago M.J."/>
            <person name="Bussereau F."/>
            <person name="Coster F."/>
            <person name="Crouzet M."/>
            <person name="D'Angelo M."/>
            <person name="Dal Pero F."/>
            <person name="De Antoni A."/>
            <person name="del Rey F."/>
            <person name="Doignon F."/>
            <person name="Domdey H."/>
            <person name="Dubois E."/>
            <person name="Fiedler T.A."/>
            <person name="Fleig U."/>
            <person name="Floeth M."/>
            <person name="Fritz C."/>
            <person name="Gaillardin C."/>
            <person name="Garcia-Cantalejo J.M."/>
            <person name="Glansdorff N."/>
            <person name="Goffeau A."/>
            <person name="Gueldener U."/>
            <person name="Herbert C.J."/>
            <person name="Heumann K."/>
            <person name="Heuss-Neitzel D."/>
            <person name="Hilbert H."/>
            <person name="Hinni K."/>
            <person name="Iraqui Houssaini I."/>
            <person name="Jacquet M."/>
            <person name="Jimenez A."/>
            <person name="Jonniaux J.-L."/>
            <person name="Karpfinger-Hartl L."/>
            <person name="Lanfranchi G."/>
            <person name="Lepingle A."/>
            <person name="Levesque H."/>
            <person name="Lyck R."/>
            <person name="Maftahi M."/>
            <person name="Mallet L."/>
            <person name="Maurer C.T.C."/>
            <person name="Messenguy F."/>
            <person name="Mewes H.-W."/>
            <person name="Moestl D."/>
            <person name="Nasr F."/>
            <person name="Nicaud J.-M."/>
            <person name="Niedenthal R.K."/>
            <person name="Pandolfo D."/>
            <person name="Pierard A."/>
            <person name="Piravandi E."/>
            <person name="Planta R.J."/>
            <person name="Pohl T.M."/>
            <person name="Purnelle B."/>
            <person name="Rebischung C."/>
            <person name="Remacha M.A."/>
            <person name="Revuelta J.L."/>
            <person name="Rinke M."/>
            <person name="Saiz J.E."/>
            <person name="Sartorello F."/>
            <person name="Scherens B."/>
            <person name="Sen-Gupta M."/>
            <person name="Soler-Mira A."/>
            <person name="Urbanus J.H.M."/>
            <person name="Valle G."/>
            <person name="Van Dyck L."/>
            <person name="Verhasselt P."/>
            <person name="Vierendeels F."/>
            <person name="Vissers S."/>
            <person name="Voet M."/>
            <person name="Volckaert G."/>
            <person name="Wach A."/>
            <person name="Wambutt R."/>
            <person name="Wedler H."/>
            <person name="Zollner A."/>
            <person name="Hani J."/>
        </authorList>
    </citation>
    <scope>NUCLEOTIDE SEQUENCE [LARGE SCALE GENOMIC DNA]</scope>
    <source>
        <strain>ATCC 204508 / S288c</strain>
    </source>
</reference>
<reference key="2">
    <citation type="journal article" date="2014" name="G3 (Bethesda)">
        <title>The reference genome sequence of Saccharomyces cerevisiae: Then and now.</title>
        <authorList>
            <person name="Engel S.R."/>
            <person name="Dietrich F.S."/>
            <person name="Fisk D.G."/>
            <person name="Binkley G."/>
            <person name="Balakrishnan R."/>
            <person name="Costanzo M.C."/>
            <person name="Dwight S.S."/>
            <person name="Hitz B.C."/>
            <person name="Karra K."/>
            <person name="Nash R.S."/>
            <person name="Weng S."/>
            <person name="Wong E.D."/>
            <person name="Lloyd P."/>
            <person name="Skrzypek M.S."/>
            <person name="Miyasato S.R."/>
            <person name="Simison M."/>
            <person name="Cherry J.M."/>
        </authorList>
    </citation>
    <scope>GENOME REANNOTATION</scope>
    <source>
        <strain>ATCC 204508 / S288c</strain>
    </source>
</reference>
<reference key="3">
    <citation type="journal article" date="2001" name="J. Biol. Chem.">
        <title>Identification of novel pheromone-response regulators through systematic overexpression of 120 protein kinases in yeast.</title>
        <authorList>
            <person name="Burchett S.A."/>
            <person name="Scott A."/>
            <person name="Errede B."/>
            <person name="Dohlman H.G."/>
        </authorList>
    </citation>
    <scope>FUNCTION</scope>
</reference>
<reference key="4">
    <citation type="journal article" date="2003" name="Nature">
        <title>Global analysis of protein localization in budding yeast.</title>
        <authorList>
            <person name="Huh W.-K."/>
            <person name="Falvo J.V."/>
            <person name="Gerke L.C."/>
            <person name="Carroll A.S."/>
            <person name="Howson R.W."/>
            <person name="Weissman J.S."/>
            <person name="O'Shea E.K."/>
        </authorList>
    </citation>
    <scope>SUBCELLULAR LOCATION [LARGE SCALE ANALYSIS]</scope>
</reference>
<reference key="5">
    <citation type="journal article" date="2003" name="Nature">
        <title>Global analysis of protein expression in yeast.</title>
        <authorList>
            <person name="Ghaemmaghami S."/>
            <person name="Huh W.-K."/>
            <person name="Bower K."/>
            <person name="Howson R.W."/>
            <person name="Belle A."/>
            <person name="Dephoure N."/>
            <person name="O'Shea E.K."/>
            <person name="Weissman J.S."/>
        </authorList>
    </citation>
    <scope>LEVEL OF PROTEIN EXPRESSION [LARGE SCALE ANALYSIS]</scope>
</reference>
<reference key="6">
    <citation type="journal article" date="2007" name="J. Proteome Res.">
        <title>Large-scale phosphorylation analysis of alpha-factor-arrested Saccharomyces cerevisiae.</title>
        <authorList>
            <person name="Li X."/>
            <person name="Gerber S.A."/>
            <person name="Rudner A.D."/>
            <person name="Beausoleil S.A."/>
            <person name="Haas W."/>
            <person name="Villen J."/>
            <person name="Elias J.E."/>
            <person name="Gygi S.P."/>
        </authorList>
    </citation>
    <scope>PHOSPHORYLATION [LARGE SCALE ANALYSIS] AT SER-414</scope>
    <scope>IDENTIFICATION BY MASS SPECTROMETRY [LARGE SCALE ANALYSIS]</scope>
    <source>
        <strain>ADR376</strain>
    </source>
</reference>
<reference key="7">
    <citation type="journal article" date="2008" name="Mol. Biol. Cell">
        <title>Protein kinases Fpk1p and Fpk2p are novel regulators of phospholipid asymmetry.</title>
        <authorList>
            <person name="Nakano K."/>
            <person name="Yamamoto T."/>
            <person name="Kishimoto T."/>
            <person name="Noji T."/>
            <person name="Tanaka K."/>
        </authorList>
    </citation>
    <scope>FUNCTION</scope>
</reference>
<reference key="8">
    <citation type="journal article" date="2008" name="Mol. Cell. Proteomics">
        <title>A multidimensional chromatography technology for in-depth phosphoproteome analysis.</title>
        <authorList>
            <person name="Albuquerque C.P."/>
            <person name="Smolka M.B."/>
            <person name="Payne S.H."/>
            <person name="Bafna V."/>
            <person name="Eng J."/>
            <person name="Zhou H."/>
        </authorList>
    </citation>
    <scope>PHOSPHORYLATION [LARGE SCALE ANALYSIS] AT SER-140; SER-185; SER-300; SER-414 AND SER-462</scope>
    <scope>IDENTIFICATION BY MASS SPECTROMETRY [LARGE SCALE ANALYSIS]</scope>
</reference>
<reference key="9">
    <citation type="journal article" date="2009" name="Science">
        <title>Global analysis of Cdk1 substrate phosphorylation sites provides insights into evolution.</title>
        <authorList>
            <person name="Holt L.J."/>
            <person name="Tuch B.B."/>
            <person name="Villen J."/>
            <person name="Johnson A.D."/>
            <person name="Gygi S.P."/>
            <person name="Morgan D.O."/>
        </authorList>
    </citation>
    <scope>PHOSPHORYLATION [LARGE SCALE ANALYSIS] AT SER-140; SER-144; SER-171; SER-175; SER-300; SER-414 AND SER-462</scope>
    <scope>IDENTIFICATION BY MASS SPECTROMETRY [LARGE SCALE ANALYSIS]</scope>
</reference>
<reference key="10">
    <citation type="journal article" date="2010" name="Proc. Natl. Acad. Sci. U.S.A.">
        <title>A protein kinase network regulates the function of aminophospholipid flippases.</title>
        <authorList>
            <person name="Roelants F.M."/>
            <person name="Baltz A.G."/>
            <person name="Trott A.E."/>
            <person name="Fereres S."/>
            <person name="Thorner J."/>
        </authorList>
    </citation>
    <scope>FUNCTION</scope>
    <scope>PHOSPHORYLATION BY YPK1</scope>
    <scope>ACTIVITY REGULATION</scope>
</reference>
<reference key="11">
    <citation type="journal article" date="2020" name="J. Biol. Chem.">
        <title>Exofacial membrane composition and lipid metabolism regulates plasma membrane P4-ATPase substrate specificity.</title>
        <authorList>
            <person name="Jain B.K."/>
            <person name="Roland B.P."/>
            <person name="Graham T.R."/>
        </authorList>
    </citation>
    <scope>DISRUPTION PHENOTYPE</scope>
</reference>
<dbReference type="EC" id="2.7.11.1"/>
<dbReference type="EMBL" id="Z71662">
    <property type="protein sequence ID" value="CAA96328.1"/>
    <property type="molecule type" value="Genomic_DNA"/>
</dbReference>
<dbReference type="EMBL" id="BK006947">
    <property type="protein sequence ID" value="DAA10588.1"/>
    <property type="molecule type" value="Genomic_DNA"/>
</dbReference>
<dbReference type="PIR" id="S63378">
    <property type="entry name" value="S63378"/>
</dbReference>
<dbReference type="RefSeq" id="NP_014445.1">
    <property type="nucleotide sequence ID" value="NM_001183224.1"/>
</dbReference>
<dbReference type="SMR" id="P53739"/>
<dbReference type="BioGRID" id="35872">
    <property type="interactions" value="164"/>
</dbReference>
<dbReference type="DIP" id="DIP-6427N"/>
<dbReference type="FunCoup" id="P53739">
    <property type="interactions" value="364"/>
</dbReference>
<dbReference type="IntAct" id="P53739">
    <property type="interactions" value="13"/>
</dbReference>
<dbReference type="MINT" id="P53739"/>
<dbReference type="STRING" id="4932.YNR047W"/>
<dbReference type="iPTMnet" id="P53739"/>
<dbReference type="PaxDb" id="4932-YNR047W"/>
<dbReference type="PeptideAtlas" id="P53739"/>
<dbReference type="EnsemblFungi" id="YNR047W_mRNA">
    <property type="protein sequence ID" value="YNR047W"/>
    <property type="gene ID" value="YNR047W"/>
</dbReference>
<dbReference type="GeneID" id="855783"/>
<dbReference type="KEGG" id="sce:YNR047W"/>
<dbReference type="AGR" id="SGD:S000005330"/>
<dbReference type="SGD" id="S000005330">
    <property type="gene designation" value="FPK1"/>
</dbReference>
<dbReference type="VEuPathDB" id="FungiDB:YNR047W"/>
<dbReference type="eggNOG" id="KOG0610">
    <property type="taxonomic scope" value="Eukaryota"/>
</dbReference>
<dbReference type="GeneTree" id="ENSGT00940000175956"/>
<dbReference type="HOGENOM" id="CLU_000288_84_2_1"/>
<dbReference type="InParanoid" id="P53739"/>
<dbReference type="OMA" id="SHRAFFK"/>
<dbReference type="OrthoDB" id="432483at2759"/>
<dbReference type="BioCyc" id="YEAST:G3O-33354-MONOMER"/>
<dbReference type="BioGRID-ORCS" id="855783">
    <property type="hits" value="10 hits in 13 CRISPR screens"/>
</dbReference>
<dbReference type="PRO" id="PR:P53739"/>
<dbReference type="Proteomes" id="UP000002311">
    <property type="component" value="Chromosome XIV"/>
</dbReference>
<dbReference type="RNAct" id="P53739">
    <property type="molecule type" value="protein"/>
</dbReference>
<dbReference type="GO" id="GO:0005737">
    <property type="term" value="C:cytoplasm"/>
    <property type="evidence" value="ECO:0000314"/>
    <property type="project" value="SGD"/>
</dbReference>
<dbReference type="GO" id="GO:0043332">
    <property type="term" value="C:mating projection tip"/>
    <property type="evidence" value="ECO:0000314"/>
    <property type="project" value="SGD"/>
</dbReference>
<dbReference type="GO" id="GO:0005634">
    <property type="term" value="C:nucleus"/>
    <property type="evidence" value="ECO:0000318"/>
    <property type="project" value="GO_Central"/>
</dbReference>
<dbReference type="GO" id="GO:0005886">
    <property type="term" value="C:plasma membrane"/>
    <property type="evidence" value="ECO:0000314"/>
    <property type="project" value="SGD"/>
</dbReference>
<dbReference type="GO" id="GO:0005524">
    <property type="term" value="F:ATP binding"/>
    <property type="evidence" value="ECO:0007669"/>
    <property type="project" value="UniProtKB-KW"/>
</dbReference>
<dbReference type="GO" id="GO:0004672">
    <property type="term" value="F:protein kinase activity"/>
    <property type="evidence" value="ECO:0000314"/>
    <property type="project" value="SGD"/>
</dbReference>
<dbReference type="GO" id="GO:0106310">
    <property type="term" value="F:protein serine kinase activity"/>
    <property type="evidence" value="ECO:0007669"/>
    <property type="project" value="RHEA"/>
</dbReference>
<dbReference type="GO" id="GO:0004674">
    <property type="term" value="F:protein serine/threonine kinase activity"/>
    <property type="evidence" value="ECO:0000314"/>
    <property type="project" value="SGD"/>
</dbReference>
<dbReference type="GO" id="GO:0045332">
    <property type="term" value="P:phospholipid translocation"/>
    <property type="evidence" value="ECO:0000318"/>
    <property type="project" value="GO_Central"/>
</dbReference>
<dbReference type="GO" id="GO:2000370">
    <property type="term" value="P:positive regulation of clathrin-dependent endocytosis"/>
    <property type="evidence" value="ECO:0000315"/>
    <property type="project" value="SGD"/>
</dbReference>
<dbReference type="GO" id="GO:0061092">
    <property type="term" value="P:positive regulation of phospholipid translocation"/>
    <property type="evidence" value="ECO:0000316"/>
    <property type="project" value="SGD"/>
</dbReference>
<dbReference type="GO" id="GO:0000749">
    <property type="term" value="P:response to pheromone triggering conjugation with cellular fusion"/>
    <property type="evidence" value="ECO:0000315"/>
    <property type="project" value="SGD"/>
</dbReference>
<dbReference type="CDD" id="cd05574">
    <property type="entry name" value="STKc_phototropin_like"/>
    <property type="match status" value="1"/>
</dbReference>
<dbReference type="FunFam" id="1.10.510.10:FF:000121">
    <property type="entry name" value="Serine/threonine-protein kinase nrc-2"/>
    <property type="match status" value="1"/>
</dbReference>
<dbReference type="FunFam" id="3.30.200.20:FF:000078">
    <property type="entry name" value="Serine/threonine-protein kinase nrc-2"/>
    <property type="match status" value="1"/>
</dbReference>
<dbReference type="Gene3D" id="3.30.200.20">
    <property type="entry name" value="Phosphorylase Kinase, domain 1"/>
    <property type="match status" value="1"/>
</dbReference>
<dbReference type="Gene3D" id="1.10.510.10">
    <property type="entry name" value="Transferase(Phosphotransferase) domain 1"/>
    <property type="match status" value="1"/>
</dbReference>
<dbReference type="InterPro" id="IPR000961">
    <property type="entry name" value="AGC-kinase_C"/>
</dbReference>
<dbReference type="InterPro" id="IPR011009">
    <property type="entry name" value="Kinase-like_dom_sf"/>
</dbReference>
<dbReference type="InterPro" id="IPR000719">
    <property type="entry name" value="Prot_kinase_dom"/>
</dbReference>
<dbReference type="InterPro" id="IPR008271">
    <property type="entry name" value="Ser/Thr_kinase_AS"/>
</dbReference>
<dbReference type="PANTHER" id="PTHR45637">
    <property type="entry name" value="FLIPPASE KINASE 1-RELATED"/>
    <property type="match status" value="1"/>
</dbReference>
<dbReference type="Pfam" id="PF00069">
    <property type="entry name" value="Pkinase"/>
    <property type="match status" value="1"/>
</dbReference>
<dbReference type="SMART" id="SM00220">
    <property type="entry name" value="S_TKc"/>
    <property type="match status" value="1"/>
</dbReference>
<dbReference type="SUPFAM" id="SSF56112">
    <property type="entry name" value="Protein kinase-like (PK-like)"/>
    <property type="match status" value="1"/>
</dbReference>
<dbReference type="PROSITE" id="PS51285">
    <property type="entry name" value="AGC_KINASE_CTER"/>
    <property type="match status" value="1"/>
</dbReference>
<dbReference type="PROSITE" id="PS50011">
    <property type="entry name" value="PROTEIN_KINASE_DOM"/>
    <property type="match status" value="1"/>
</dbReference>
<dbReference type="PROSITE" id="PS00108">
    <property type="entry name" value="PROTEIN_KINASE_ST"/>
    <property type="match status" value="1"/>
</dbReference>
<gene>
    <name type="primary">FPK1</name>
    <name type="ordered locus">YNR047W</name>
    <name type="ORF">N3449</name>
</gene>
<protein>
    <recommendedName>
        <fullName>Flippase kinase 1</fullName>
        <ecNumber>2.7.11.1</ecNumber>
    </recommendedName>
</protein>